<reference key="1">
    <citation type="journal article" date="1992" name="J. Biol. Chem.">
        <title>The cyclic peptide synthetase catalyzing HC-toxin production in the filamentous fungus Cochliobolus carbonum is encoded by a 15.7-kilobase open reading frame.</title>
        <authorList>
            <person name="Scott-Craig J.S."/>
            <person name="Panaccione D.G."/>
            <person name="Pocard J.-A."/>
            <person name="Walton J.D."/>
        </authorList>
    </citation>
    <scope>NUCLEOTIDE SEQUENCE [GENOMIC DNA]</scope>
    <scope>PARTIAL PROTEIN SEQUENCE</scope>
    <source>
        <strain>ATCC 90305 / SB111 / 2R15</strain>
    </source>
</reference>
<reference key="2">
    <citation type="submission" date="2005-04" db="EMBL/GenBank/DDBJ databases">
        <authorList>
            <person name="Scott-Craig J.S."/>
            <person name="Panaccione D.G."/>
            <person name="Pocard J.-A."/>
            <person name="Walton J.D."/>
        </authorList>
    </citation>
    <scope>SEQUENCE REVISION TO 3448-3462; 3683 AND 4017</scope>
    <source>
        <strain>ATCC 90305 / SB111 / 2R15</strain>
    </source>
</reference>
<reference key="3">
    <citation type="journal article" date="1987" name="Proc. Natl. Acad. Sci. U.S.A.">
        <title>Two enzymes involved in biosynthesis of the host-selective phytotoxin HC-toxin.</title>
        <authorList>
            <person name="Walton J.D."/>
        </authorList>
    </citation>
    <scope>FUNCTION</scope>
    <scope>CATALYTIC ACTIVITY</scope>
    <scope>PATHWAY</scope>
</reference>
<reference key="4">
    <citation type="journal article" date="1988" name="Mol. Plant Microbe Interact.">
        <title>Properties of two enzymes involved in the biosynthesis of the fungal pathogenicity factor HC-toxin.</title>
        <authorList>
            <person name="Walton J.D."/>
            <person name="Holden F.R."/>
        </authorList>
    </citation>
    <scope>FUNCTION</scope>
    <scope>CATALYTIC ACTIVITY</scope>
    <scope>BIOPHYSICOCHEMICAL PROPERTIES</scope>
    <scope>PATHWAY</scope>
</reference>
<reference key="5">
    <citation type="journal article" date="1992" name="Proc. Natl. Acad. Sci. U.S.A.">
        <title>A cyclic peptide synthetase gene required for pathogenicity of the fungus Cochliobolus carbonum on maize.</title>
        <authorList>
            <person name="Panaccione D.G."/>
            <person name="Scott-Craig J.S."/>
            <person name="Pocard J.A."/>
            <person name="Walton J.D."/>
        </authorList>
    </citation>
    <scope>FUNCTION</scope>
    <scope>DISRUPTION PHENOTYPE</scope>
</reference>
<reference key="6">
    <citation type="journal article" date="1996" name="Plant Cell">
        <title>Chromosomal organization of TOX2, a complex locus controlling host-selective toxin biosynthesis in Cochliobolus carbonum.</title>
        <authorList>
            <person name="Ahn J.H."/>
            <person name="Walton J.D."/>
        </authorList>
    </citation>
    <scope>IDENTIFICATION WITHIN THE TOX2 CLUSTER</scope>
    <scope>FUNCTION</scope>
</reference>
<reference key="7">
    <citation type="journal article" date="2000" name="J. Biol. Chem.">
        <title>A eukaryotic alanine racemase gene involved in cyclic peptide biosynthesis.</title>
        <authorList>
            <person name="Cheng Y.-Q."/>
            <person name="Walton J.D."/>
        </authorList>
    </citation>
    <scope>FUNCTION</scope>
    <source>
        <strain>ATCC 90305 / SB111 / 2R15</strain>
    </source>
</reference>
<reference key="8">
    <citation type="journal article" date="2002" name="Fungal Genet. Biol.">
        <title>An extended physical map of the TOX2 locus of Cochliobolus carbonum required for biosynthesis of HC-toxin.</title>
        <authorList>
            <person name="Ahn J.H."/>
            <person name="Cheng Y.Q."/>
            <person name="Walton J.D."/>
        </authorList>
    </citation>
    <scope>TOX2 CLUSTER ORGANIZATION</scope>
</reference>
<sequence>MTMPHHSSGPAKDSPLCRFPPFPGGNPVFTNIRREKVNFQLPPPDHALLAAAWAVLLRLYTGHVKTCFESATSDQEANLVTYEARDSDTLQTIVLRGACVSSTAEEKAGLRDLNTAVVRTTVSIDSWTDEMLQDKIAALLQPGKEIVLFQTPSGCVLVYMQSFMSAMEVKNVSSTLTYIMSSDPDKTAIRNLSISPRDLAQIMRWNDRKLKSERTNLVYDLFSARAHEQDANMAIDAWDGRMSYTELERVSSTWARQLQKQGISQGSWVLFCFEKSRLAVVSMIAILKAGGVCVPIDPRYPVERIRDIIRTTNATIALVGAGKTAALFKSADTAVQTIDITKDIPHGLSDTVVQSNTKIDDPAFGLFTSGSTGVPKCIVVTHSQICTAVQAYKDRFGVTSETRVLQFSSYTFDISIADTFTALFYGGTLCIPSEEDRMSNLQDYMVSVRPNWAVLTPTVSRFLDPGVVKDFISTLIFTGEASREADTVPWIEAGVNLYNVYGPAENTLITTATRIRKGKSSNIGYGVNTRTWVTDVSGACLVPVGSIGELLIESGHLADKYLNRPDRTEAAFLSDLPWIPNYEGDSVRRGRRFYRTGDLVRYCDDGSLICVGRSDTQIKLAGQRVELGDVEAHLQSDPTTSQAAVVFPRSGPLEARLIALLVTGNKDGTPHNQQSLPKPAFAQCPPDLVKYATSSLQQRLPSYMVPSVWLGIDFLPMSVSGKLDRAVLQDQLESLSPSDYAEILGTTGLEVDPGGAASSVASDSDLRDMNDDSLLLTACSRVLNLPAGKISYSQSFIHAGGDSITAMQVSSWMKRFTGKRIGVKDLLVSPSISTAASCIKSAQDGSRNFVAVRPGQRIPVSPIQKLFFQTAEASKSWNHYHQSFLFRIDQPIKPQTIEDAISLVMQRHPMLQARFERTEEGDWYQYIPIDVERRASVEVIGSLSTDDREAAMLRARQSIDLTEGPLIRCQLFNNNVDEASRLFFVVIHHAVVDLVSWRIIMEELEAHLATDSTPDRGEAYQESVPFLAWCQVQAEAVKDIPVDRTVPLIPKIPTADFGYWGLKHDENVYGNTVERKIPLGHSITEDLLYKCHDSLHTKTIDVLLAAVLVSFRRSFLDRPVPAVFNEGHGREPGGEDAVDLSRTVGWFTTISPVYVPEVSPGDILDVVRRVKDYRWATPNNGFDYFSTKYLTQSGIKLFEDHLPAEILFNYEGRYQAMESEQTVLKPESWHAGEASKDQDPGLRRFCLFEISTAVLPDGQLHLTCSWNKNMRHQGRIRLWLDTLLPAAIGEIVSSLALASPQLTLSDVELLRLYDYSSLDILKKSILSIPAVQTLDDLEGVYPGSPMQDALFLSQSKSQDGAYEVDFTWRVATSLQNSQPAVDIGCLVEAWKDTVALHAALRTVILESSLPATGILHQVVLRSHDPDIVILDVRDVTAAITILDSYPPPTEEGIALIKRPPHRLLICTTIEGSVLIKFQVNHLVFDGMSTDKIIQDLSKAYTCRHSNKLPDHSESKLHDGTYGNRPTKPPLAEFIRYIRDPQRKQDSINYWKNALRGATTCSFPPLFDQITSEKAMPRQSWASVPIPLCVDSKELSKTLANLGITMSTMFQTVWAIVLRIYSQNGQSVFGYLTSGRDAPVDGIDSAVGNFIAMLVCFFDFDDDGVHTVADMARKIHNASANSISHQACSLAEIQDALGLSTSTPLFNTAFTYLPKRPTNVKAGEPEHHLCFEELSMSDPTEFDLTLFVEPTQESNEVSAHLDFKLSYISQAYATSIASTVAHILSELVHDPYRALNTLPIVSEHDTAIIRSWNDHLFPPATECIHETFSRKVVEHPQREAICSWDGSLTYAELSDLSQRLSIHLVSLGIKVGTKIPICFEKSMWTIVTILAVVQAGGVFVLLEPGHPESRLSGIIKQVQAELLLCSPATSRMGALQNISTQMGTEFKIVELEPEFIRSLPLPPKPNHQPMVGLNDDLYVVFTSGSTGVPKGAVATHQAYATGIYEHAVACGMTSLGAPPRSLQFASYSFDASIGDIFTTLAVGGCLCIPREEDRNPAGITTFINRYGVTWAGITPSLALHLDPDAVPTLKALCVAGEPLSMSVVTVWSKRLNLINMYGPTEATVACIANQVTCTTTTVSDIGRGYRATTWVVQPDNHNSLVPIGAVGELIIEGSILCRGYLNDPERTAEVFIRSPSWLHDLRPNSTLYKTGDLVRYSADGKIIFIGRKDTQVKMNGQRFELGEVEHALQLQLDPSDGPIIVDLLKRTQSGEPDLLIAFLFVGRANTGTGNSDEIFIATSTSSLSEFSTVIKKLQDAQRAMEVLPLFMVPQAYIPIEGGIPLTAAGKIDRRMLRKLCEPFNRNDLISFTSKALSTSVKDAETTDTVEDRLARIWEKVLGVKGVGRESDFFSSGGNSMAAIALRAEAQRSGFTLFVADIFTNPRLADMAKLFSHGQSVSPSSSTLRTKVPISSLQKRSSGLQTAAPVSNGSPVRRCQKENIIDCPVAFEYEEGPSDTQLKEASRICGISSRSIEDVFPCTPMQEALVALSLIPGAQASYALHAAFELRPGLDRNRFRSAWESTVKAQPILRSRIISGSNGSSVVVTSATDSIPQLDVSGLDTFLEQQLQVGFAPGAPLFRLAFVYSKADDCDYFVISAHHAIYDGWSLNLIWSQVLALYTNGELPPPGPSFKHFARNLNLVQSKLDSEDFWRKLLVKPDQESFRFPDVPVGHKPATRCTTNFHFPFSMQSKIGTTANTCINAAWAITLAQYSSNKTVNFGVTLWGRDFPMIDIEHMTGPTIVTVPRQVNVIPESSVAEFLQDLQKSLAVVLPHQHLGLHRIQALGPIARQACDFSTLLVVNHGSSISWSELEAADIVPVPLRSSDLYAYPMVVEVENASSDTLDIRVHSDPDCIEVQLLERLMEQFGHNLQTLCRAASFDPGKRIAELMDDTATTHLRTLFSWNSRVKDSPDVAAIAVHKLLEETAQSQPAESAIVAHDGQLSYMQMDRCADVLARQIRKTNMISAQSPFVCIHLLRSATAVVSMLAVLKAGGAFMPVDISQPRSRLQNLIEESGAKLVLTLPESANALATLSGLTKVIPVSLSELVQQITDNTTKKDEYCKSGDTDPSSPAYLLYTSGTSGKPKGVVMEHRAWSLGFTCHAEYMGFNSCTRILQFSSLMFDLSILEIWAVLYAGGCLFIPSDKERVNNLQDFTRINDINTVFLTPSIGKLLNPKDLPNISFAGFIGEPMTRSLIDAWTLPGRRLVNSYGPTEACVLVTAREISPTAPHDKPSSNIGHALGANIWVVEPQRTALVPIGAVGELCIEAPSLARCYLANPERTEYSFPSTVLDNWQTKKGTRVYRTGDLVRYASDGTLDFLGRKDGQIKLRGQRIELGEIEHHIRRLMSDDPRFHEASVQLYNPATDPDRDATVDVQMREPYLAGLLVLDLVFTDEVMGIPCTSLTSANTSENLQTLVTELKKSLRGVLPHYMVPLHFVAVSRLPTGSSGKLDHAFVRACLRELTAPLDGNFPKVEQVLTTNESVLRQWWGTVLAMDPHSIQRGDDFFSLGGSSISAMRLVGLARSSGHKLQHEDIFMCPRLADMAGQISFVQEASVSPTTSPTIKFDLLDDCEVDEVIDHILPQLDMNKELIEDVYPCTPLQESLMAATARHGEAYTMIQSITVLASQLAQLKKAMDVVFRDFEVLRTRIALGPSQQALQVVVKHEELSWESFPSIQSFKDHFYRSLGYGKPLARLAVITQALDTKQPISHGTREARTKNSQDTVMVVVGAHHSIYDAHVLSMIWRRLYREFIGSQADGILEAETSRSEGVVPFKSYVEKLLRGKDNDESLLFWKEKLRGVSSSQFPPASWPRVLEHQPSATQTLITKVSLPTSSRKKLGATVATVAYAAWALTIAHYTADPDVVFGATLSGRETMAGSISHPESIAGPTIITVPLRIIIDFQTVVSDFLSTLQKDIVRAAYFGQMMGLNSIAHIDNDCRDACGFKSIIVVQVPDEGENHDGRAANPFQMSLESIGHFPAPLVVEVEQSESTDVLIRMAYDPVLVPEKLAHFISDTFTTTMSNLSAANPKAKVESIPALSEAHLAELDVTCPEWILGKAKDEKIRTESHQCLQDLVCRRAQQSPNSQAIDSWDGSISYHELDGLSSILAEHLSQLGVRPEAPVCLLFEKSKWAVVAMIGIIKAGGCFVPLDPSYPHERLEHIISETGSSVIVTSAAYSKLCLSLSVRGIVCDGSVFSSTKKPLPSTADSPPSFSVRPNQAAYILFTSGSTGKPKGVVMEHHSVCSALIALGKRMGLGPQSRVLQFNSYWFDVMLLDIFGTLVYGGCLCIPKEEQRMSNLSGWVQKFKVNTMLLSTSVSRLMQPADTPSLETLCLTGEAVLQSDVDRWAPKLHLIAGYGPTETCIMSVSGELTPSSPANLIGKPVSCQAWVINPLKETELAPYGATGELYIQGPTVARGYLHDDVLTSKAFIVDPQWLTGYKTNENQWSRRAYKTGDLVFWGPQSNLYYVRRKDSSQVKIRGQRVELAEIEEVIRQHIPPDVTVCVDLLSSDDQNTRIILGAVLGIGDRALGGPEDLEVIGYMDDLKSHIIPALEASLPHHMIPEAYVPFVQLPTLGSGKLDRKTVRRVAGPLAFSLPQASARHPNQPTVTHTQKLLRQLWCKILPQLDESAVNKQDNFLGIGGDSIAAIKLVALLRQHGISLAVAEIFTRPTLEAMSSLIDEHNFVVSHAGILSDVTRNTSGVMRQTTNLIAGRHSMAVEKSRECDNSTLPCTEYQQMFLAGTEAFTGAHSAQFIFRLPEKIDLDRLQAAFDHCADWYPNLRTQIHKDADTGRLLHDISPIGVKVPWSCHYSDDLNTVLSHDKKFPPGLDGPLHRVTIMRHRDPTESMLVWTLNHAAYDAWSLRMMLEHITEAYANPDYEPSYSLGWTAFVLHTENTKEASRSFWSSYLSDVKPARLMFNYNLVSNPRQDRLYEARINIPKRVLSQATAATVLLAGLTLLVARVCDTRDVILAHLLTGRTLPLAGIENCPGPTITKVPLRIPLMDQDLVTLELDSVAKKITAELMRVMPHEHSGLSAIREFIPQAEGTTTSSGKFHAGSVLGRLPLDLVIHPKGGLDLLGKHGLGLQNEGFRLVAPPSGGLSMECALVDDDDDKRSDTISVDVSVLWDQRAATQEDVIELVHSLQGIFTKRNLAASICLMYK</sequence>
<feature type="chain" id="PRO_0000193097" description="HC-toxin synthetase">
    <location>
        <begin position="1"/>
        <end position="5218"/>
    </location>
</feature>
<feature type="domain" description="Carrier 1" evidence="2">
    <location>
        <begin position="769"/>
        <end position="843"/>
    </location>
</feature>
<feature type="domain" description="Carrier 2" evidence="2">
    <location>
        <begin position="2379"/>
        <end position="2453"/>
    </location>
</feature>
<feature type="domain" description="Carrier 3" evidence="2">
    <location>
        <begin position="3532"/>
        <end position="3608"/>
    </location>
</feature>
<feature type="domain" description="Carrier 4" evidence="2">
    <location>
        <begin position="4666"/>
        <end position="4740"/>
    </location>
</feature>
<feature type="region of interest" description="Adenylation 1" evidence="1">
    <location>
        <begin position="223"/>
        <end position="620"/>
    </location>
</feature>
<feature type="region of interest" description="Condensation 1" evidence="1">
    <location>
        <begin position="858"/>
        <end position="1154"/>
    </location>
</feature>
<feature type="region of interest" description="Epimerization" evidence="1">
    <location>
        <begin position="1338"/>
        <end position="1806"/>
    </location>
</feature>
<feature type="region of interest" description="Adenylation 2" evidence="1">
    <location>
        <begin position="1828"/>
        <end position="2233"/>
    </location>
</feature>
<feature type="region of interest" description="Condensation 2" evidence="1">
    <location>
        <begin position="2531"/>
        <end position="2929"/>
    </location>
</feature>
<feature type="region of interest" description="Adenylation 3" evidence="1">
    <location>
        <begin position="2979"/>
        <end position="3386"/>
    </location>
</feature>
<feature type="region of interest" description="Condensation 3" evidence="1">
    <location>
        <begin position="3649"/>
        <end position="4102"/>
    </location>
</feature>
<feature type="region of interest" description="Adenylation 4" evidence="1">
    <location>
        <begin position="4134"/>
        <end position="4530"/>
    </location>
</feature>
<feature type="region of interest" description="Condensation 4" evidence="1">
    <location>
        <begin position="4785"/>
        <end position="5101"/>
    </location>
</feature>
<feature type="modified residue" description="O-(pantetheine 4'-phosphoryl)serine" evidence="2">
    <location>
        <position position="803"/>
    </location>
</feature>
<feature type="modified residue" description="O-(pantetheine 4'-phosphoryl)serine" evidence="2">
    <location>
        <position position="2414"/>
    </location>
</feature>
<feature type="modified residue" description="O-(pantetheine 4'-phosphoryl)serine" evidence="2">
    <location>
        <position position="3569"/>
    </location>
</feature>
<feature type="modified residue" description="O-(pantetheine 4'-phosphoryl)serine" evidence="2">
    <location>
        <position position="4701"/>
    </location>
</feature>
<dbReference type="EC" id="6.3.2.-" evidence="7 9"/>
<dbReference type="EMBL" id="M98024">
    <property type="protein sequence ID" value="AAA33023.2"/>
    <property type="molecule type" value="Genomic_DNA"/>
</dbReference>
<dbReference type="SMR" id="Q01886"/>
<dbReference type="UniPathway" id="UPA00874"/>
<dbReference type="PHI-base" id="PHI:12"/>
<dbReference type="GO" id="GO:0005737">
    <property type="term" value="C:cytoplasm"/>
    <property type="evidence" value="ECO:0007669"/>
    <property type="project" value="TreeGrafter"/>
</dbReference>
<dbReference type="GO" id="GO:0016881">
    <property type="term" value="F:acid-amino acid ligase activity"/>
    <property type="evidence" value="ECO:0000314"/>
    <property type="project" value="UniProtKB"/>
</dbReference>
<dbReference type="GO" id="GO:0016853">
    <property type="term" value="F:isomerase activity"/>
    <property type="evidence" value="ECO:0007669"/>
    <property type="project" value="UniProtKB-KW"/>
</dbReference>
<dbReference type="GO" id="GO:0031177">
    <property type="term" value="F:phosphopantetheine binding"/>
    <property type="evidence" value="ECO:0007669"/>
    <property type="project" value="InterPro"/>
</dbReference>
<dbReference type="GO" id="GO:0043041">
    <property type="term" value="P:amino acid activation for nonribosomal peptide biosynthetic process"/>
    <property type="evidence" value="ECO:0007669"/>
    <property type="project" value="TreeGrafter"/>
</dbReference>
<dbReference type="GO" id="GO:0009403">
    <property type="term" value="P:toxin biosynthetic process"/>
    <property type="evidence" value="ECO:0000314"/>
    <property type="project" value="UniProtKB"/>
</dbReference>
<dbReference type="CDD" id="cd05918">
    <property type="entry name" value="A_NRPS_SidN3_like"/>
    <property type="match status" value="4"/>
</dbReference>
<dbReference type="CDD" id="cd19542">
    <property type="entry name" value="CT_NRPS-like"/>
    <property type="match status" value="1"/>
</dbReference>
<dbReference type="CDD" id="cd19534">
    <property type="entry name" value="E_NRPS"/>
    <property type="match status" value="1"/>
</dbReference>
<dbReference type="CDD" id="cd19545">
    <property type="entry name" value="FUM14_C_NRPS-like"/>
    <property type="match status" value="3"/>
</dbReference>
<dbReference type="FunFam" id="3.40.50.12780:FF:000012">
    <property type="entry name" value="Non-ribosomal peptide synthetase"/>
    <property type="match status" value="1"/>
</dbReference>
<dbReference type="FunFam" id="3.30.559.30:FF:000002">
    <property type="entry name" value="Nonribosomal peptide synthase Pes1"/>
    <property type="match status" value="1"/>
</dbReference>
<dbReference type="FunFam" id="3.30.300.30:FF:000015">
    <property type="entry name" value="Nonribosomal peptide synthase SidD"/>
    <property type="match status" value="4"/>
</dbReference>
<dbReference type="FunFam" id="3.40.50.12780:FF:000014">
    <property type="entry name" value="Nonribosomal peptide synthetase 1"/>
    <property type="match status" value="2"/>
</dbReference>
<dbReference type="Gene3D" id="3.30.300.30">
    <property type="match status" value="4"/>
</dbReference>
<dbReference type="Gene3D" id="1.10.1200.10">
    <property type="entry name" value="ACP-like"/>
    <property type="match status" value="4"/>
</dbReference>
<dbReference type="Gene3D" id="3.30.559.10">
    <property type="entry name" value="Chloramphenicol acetyltransferase-like domain"/>
    <property type="match status" value="5"/>
</dbReference>
<dbReference type="Gene3D" id="3.40.50.12780">
    <property type="entry name" value="N-terminal domain of ligase-like"/>
    <property type="match status" value="4"/>
</dbReference>
<dbReference type="Gene3D" id="3.30.559.30">
    <property type="entry name" value="Nonribosomal peptide synthetase, condensation domain"/>
    <property type="match status" value="5"/>
</dbReference>
<dbReference type="InterPro" id="IPR010071">
    <property type="entry name" value="AA_adenyl_dom"/>
</dbReference>
<dbReference type="InterPro" id="IPR036736">
    <property type="entry name" value="ACP-like_sf"/>
</dbReference>
<dbReference type="InterPro" id="IPR045851">
    <property type="entry name" value="AMP-bd_C_sf"/>
</dbReference>
<dbReference type="InterPro" id="IPR020845">
    <property type="entry name" value="AMP-binding_CS"/>
</dbReference>
<dbReference type="InterPro" id="IPR000873">
    <property type="entry name" value="AMP-dep_synth/lig_dom"/>
</dbReference>
<dbReference type="InterPro" id="IPR042099">
    <property type="entry name" value="ANL_N_sf"/>
</dbReference>
<dbReference type="InterPro" id="IPR023213">
    <property type="entry name" value="CAT-like_dom_sf"/>
</dbReference>
<dbReference type="InterPro" id="IPR001242">
    <property type="entry name" value="Condensatn"/>
</dbReference>
<dbReference type="InterPro" id="IPR020806">
    <property type="entry name" value="PKS_PP-bd"/>
</dbReference>
<dbReference type="InterPro" id="IPR009081">
    <property type="entry name" value="PP-bd_ACP"/>
</dbReference>
<dbReference type="InterPro" id="IPR006162">
    <property type="entry name" value="Ppantetheine_attach_site"/>
</dbReference>
<dbReference type="NCBIfam" id="TIGR01733">
    <property type="entry name" value="AA-adenyl-dom"/>
    <property type="match status" value="4"/>
</dbReference>
<dbReference type="NCBIfam" id="NF003417">
    <property type="entry name" value="PRK04813.1"/>
    <property type="match status" value="5"/>
</dbReference>
<dbReference type="PANTHER" id="PTHR45527:SF16">
    <property type="entry name" value="NONRIBOSOMAL PEPTIDE SYNTHASE ATNA-RELATED"/>
    <property type="match status" value="1"/>
</dbReference>
<dbReference type="PANTHER" id="PTHR45527">
    <property type="entry name" value="NONRIBOSOMAL PEPTIDE SYNTHETASE"/>
    <property type="match status" value="1"/>
</dbReference>
<dbReference type="Pfam" id="PF00501">
    <property type="entry name" value="AMP-binding"/>
    <property type="match status" value="4"/>
</dbReference>
<dbReference type="Pfam" id="PF00668">
    <property type="entry name" value="Condensation"/>
    <property type="match status" value="5"/>
</dbReference>
<dbReference type="Pfam" id="PF00550">
    <property type="entry name" value="PP-binding"/>
    <property type="match status" value="4"/>
</dbReference>
<dbReference type="SMART" id="SM00823">
    <property type="entry name" value="PKS_PP"/>
    <property type="match status" value="3"/>
</dbReference>
<dbReference type="SMART" id="SM01294">
    <property type="entry name" value="PKS_PP_betabranch"/>
    <property type="match status" value="1"/>
</dbReference>
<dbReference type="SUPFAM" id="SSF56801">
    <property type="entry name" value="Acetyl-CoA synthetase-like"/>
    <property type="match status" value="4"/>
</dbReference>
<dbReference type="SUPFAM" id="SSF47336">
    <property type="entry name" value="ACP-like"/>
    <property type="match status" value="4"/>
</dbReference>
<dbReference type="SUPFAM" id="SSF52777">
    <property type="entry name" value="CoA-dependent acyltransferases"/>
    <property type="match status" value="10"/>
</dbReference>
<dbReference type="PROSITE" id="PS00455">
    <property type="entry name" value="AMP_BINDING"/>
    <property type="match status" value="3"/>
</dbReference>
<dbReference type="PROSITE" id="PS50075">
    <property type="entry name" value="CARRIER"/>
    <property type="match status" value="4"/>
</dbReference>
<dbReference type="PROSITE" id="PS00012">
    <property type="entry name" value="PHOSPHOPANTETHEINE"/>
    <property type="match status" value="4"/>
</dbReference>
<accession>Q01886</accession>
<gene>
    <name evidence="10" type="primary">HTS1</name>
</gene>
<organism>
    <name type="scientific">Cochliobolus carbonum</name>
    <name type="common">Maize leaf spot fungus</name>
    <name type="synonym">Bipolaris zeicola</name>
    <dbReference type="NCBI Taxonomy" id="5017"/>
    <lineage>
        <taxon>Eukaryota</taxon>
        <taxon>Fungi</taxon>
        <taxon>Dikarya</taxon>
        <taxon>Ascomycota</taxon>
        <taxon>Pezizomycotina</taxon>
        <taxon>Dothideomycetes</taxon>
        <taxon>Pleosporomycetidae</taxon>
        <taxon>Pleosporales</taxon>
        <taxon>Pleosporineae</taxon>
        <taxon>Pleosporaceae</taxon>
        <taxon>Bipolaris</taxon>
    </lineage>
</organism>
<proteinExistence type="evidence at protein level"/>
<keyword id="KW-0903">Direct protein sequencing</keyword>
<keyword id="KW-0413">Isomerase</keyword>
<keyword id="KW-0436">Ligase</keyword>
<keyword id="KW-0511">Multifunctional enzyme</keyword>
<keyword id="KW-0596">Phosphopantetheine</keyword>
<keyword id="KW-0597">Phosphoprotein</keyword>
<keyword id="KW-0677">Repeat</keyword>
<name>HTS1_COCCA</name>
<protein>
    <recommendedName>
        <fullName evidence="10">HC-toxin synthetase</fullName>
        <shortName evidence="10">HTS</shortName>
        <ecNumber evidence="7 9">6.3.2.-</ecNumber>
    </recommendedName>
    <alternativeName>
        <fullName evidence="10">Cyclic peptide synthetase HTS1</fullName>
    </alternativeName>
    <alternativeName>
        <fullName evidence="10">Non-ribosomal peptide synthetase HTS1</fullName>
    </alternativeName>
    <alternativeName>
        <fullName evidence="10">TOX2 HC-toxin biosynthesis cluster protein HST1</fullName>
    </alternativeName>
</protein>
<evidence type="ECO:0000255" key="1"/>
<evidence type="ECO:0000255" key="2">
    <source>
        <dbReference type="PROSITE-ProRule" id="PRU00258"/>
    </source>
</evidence>
<evidence type="ECO:0000269" key="3">
    <source>
    </source>
</evidence>
<evidence type="ECO:0000269" key="4">
    <source>
    </source>
</evidence>
<evidence type="ECO:0000269" key="5">
    <source>
    </source>
</evidence>
<evidence type="ECO:0000269" key="6">
    <source>
    </source>
</evidence>
<evidence type="ECO:0000269" key="7">
    <source>
    </source>
</evidence>
<evidence type="ECO:0000269" key="8">
    <source>
    </source>
</evidence>
<evidence type="ECO:0000269" key="9">
    <source ref="4"/>
</evidence>
<evidence type="ECO:0000303" key="10">
    <source>
    </source>
</evidence>
<evidence type="ECO:0000305" key="11"/>
<evidence type="ECO:0000305" key="12">
    <source>
    </source>
</evidence>
<comment type="function">
    <text evidence="3 4 7 8 9">Non-ribosomal peptide synthetase, part of the diffuse TOX2 gene cluster that mediates the biosynthesis of the HC-toxin, cyclic tetrapeptide of structure cyclo(D-Pro-L-Ala-D-Ala-L-Aeo), where Aeo stands for 2-amino-9,10-epoxi-8-oxodecanoic acid (PubMed:11607305, PubMed:16593904, PubMed:8672886, Ref.4). HC-toxin is a determinant of specificity and virulence in the interaction between the producing fungus and its host, maize (PubMed:11607305). HTS1, contains four modules, one for each amino acid in HC-toxin, with the order of activation being most likely Pro, Ala, Ala, and Aeo (PubMed:11607305). In addition, HTS1 has one epimerase domain between modules 1 and 2, which is responsible for epimerizing L-Pro to D-Pro (PubMed:11607305). The absence of an epimerizing domain after module 3, for producing D-Ala, can be explained by the presence in the cluster of TOXG, an Ala racemase, which produces D-Ala for incorporation by HTS1 into HC-toxin (PubMed:10671527).</text>
</comment>
<comment type="cofactor">
    <cofactor evidence="2">
        <name>pantetheine 4'-phosphate</name>
        <dbReference type="ChEBI" id="CHEBI:47942"/>
    </cofactor>
</comment>
<comment type="biophysicochemical properties">
    <kinetics>
        <KM evidence="9">17.6 mM for L-proline</KM>
        <KM evidence="9">101 mM for L-alanine</KM>
        <KM evidence="9">3.4 mM for D-alanine</KM>
    </kinetics>
</comment>
<comment type="pathway">
    <text evidence="7 9">Mycotoxin biosynthesis; HC-toxin biosynthesis.</text>
</comment>
<comment type="domain">
    <text evidence="12">NRP synthetases are composed of discrete domains (adenylation (A), thiolation (T) or peptidyl carrier protein (PCP) and condensation (C) domains) which when grouped together are referred to as a single module. Each module is responsible for the recognition (via the A domain) and incorporation of a single amino acid into the growing peptide product. Thus, an NRP synthetase is generally composed of one or more modules and can terminate in a thioesterase domain (TE) that releases the newly synthesized peptide from the enzyme. Occasionally, epimerase (E) domains (responsible for L- to D-amino acid conversion) are present within the NRP synthetase. HST1 has the following tetrameric architecture: A-T-C-E- A-T-C-A-T-C-A-T-C.</text>
</comment>
<comment type="disruption phenotype">
    <text evidence="4">Impairs the production of HC-toxin and virulence.</text>
</comment>
<comment type="miscellaneous">
    <text evidence="5 8">The genes involved in HC-toxin biosynthesis, called collectively TOX2, are organized into a diffuse cluster that spans &gt;500 kb. All of the known genes are duplicated or triplicated within this region, with some variation in copy number and chromosomal location among different race 1 strains.</text>
</comment>
<comment type="similarity">
    <text evidence="11">Belongs to the NRP synthetase family.</text>
</comment>
<comment type="caution">
    <text evidence="4 6 7 9">Initial studies suggested that 2 distinct enzymes were involved in the synthesis of the cyclic tetrapeptide (PubMed:16593904, Ref.4). However, it was later found that both activities were catalyzed by a single enzyme, a the non-ribosomal peptide synthetase HTS1 (PubMed:11607305, PubMed:1281482).</text>
</comment>